<sequence length="263" mass="30114">MQTRLLRTLLSLTLSLLILSMALANRGCSNSSSQLLSQLQNQANLTGNTESLLEPYIRLQNLNTPDLRAACTQHSVAFPSEDTLRQLSKPHFLSTVYTTLDRVLYQLDALRQKFLKTPAFPKLDSARHNILGIRNNVFCMARLLNHSLEIPEPTQTDSGASRSTTTPDVFNTKIGSCGFLWGYHRFMGSVGRVFREWDDGSTRSRRQSPLRARRKGTRRIRVRHKGTRRIRVRRKGTRRIWVRRKGSRKIRPSRSTQSPTTRA</sequence>
<keyword id="KW-0002">3D-structure</keyword>
<keyword id="KW-0165">Cleavage on pair of basic residues</keyword>
<keyword id="KW-0202">Cytokine</keyword>
<keyword id="KW-1015">Disulfide bond</keyword>
<keyword id="KW-0325">Glycoprotein</keyword>
<keyword id="KW-0341">Growth regulation</keyword>
<keyword id="KW-1185">Reference proteome</keyword>
<keyword id="KW-0964">Secreted</keyword>
<keyword id="KW-0732">Signal</keyword>
<comment type="function">
    <text evidence="1">Growth regulator. Inhibits the proliferation of a number of tumor cell lines. It regulates cytokine production, including IL-6, G-CSF and GM-CSF from endothelial cells (By similarity). Uses only type II OSM receptor (heterodimers composed of OSMR and IL6ST). Involved in the maturation of fetal hepatocytes, thereby promoting liver development and regeneration (By similarity).</text>
</comment>
<comment type="subcellular location">
    <subcellularLocation>
        <location>Secreted</location>
    </subcellularLocation>
</comment>
<comment type="PTM">
    <text evidence="1">Propeptide processing is not important for receptor binding activity but may be important growth-inhibitory activity.</text>
</comment>
<comment type="similarity">
    <text evidence="5">Belongs to the LIF/OSM family.</text>
</comment>
<dbReference type="EMBL" id="D31942">
    <property type="protein sequence ID" value="BAA06712.1"/>
    <property type="molecule type" value="mRNA"/>
</dbReference>
<dbReference type="EMBL" id="AK155637">
    <property type="protein sequence ID" value="BAE33358.1"/>
    <property type="molecule type" value="mRNA"/>
</dbReference>
<dbReference type="EMBL" id="AL807825">
    <property type="status" value="NOT_ANNOTATED_CDS"/>
    <property type="molecule type" value="Genomic_DNA"/>
</dbReference>
<dbReference type="EMBL" id="BC099866">
    <property type="protein sequence ID" value="AAH99866.1"/>
    <property type="molecule type" value="mRNA"/>
</dbReference>
<dbReference type="CCDS" id="CCDS24382.1"/>
<dbReference type="PIR" id="S64719">
    <property type="entry name" value="S64719"/>
</dbReference>
<dbReference type="RefSeq" id="NP_001013383.1">
    <property type="nucleotide sequence ID" value="NM_001013365.3"/>
</dbReference>
<dbReference type="PDB" id="8V2B">
    <property type="method" value="EM"/>
    <property type="resolution" value="3.67 A"/>
    <property type="chains" value="A=24-206"/>
</dbReference>
<dbReference type="PDB" id="8V2C">
    <property type="method" value="EM"/>
    <property type="resolution" value="3.46 A"/>
    <property type="chains" value="A=24-206"/>
</dbReference>
<dbReference type="PDBsum" id="8V2B"/>
<dbReference type="PDBsum" id="8V2C"/>
<dbReference type="EMDB" id="EMD-42904"/>
<dbReference type="EMDB" id="EMD-42905"/>
<dbReference type="SMR" id="P53347"/>
<dbReference type="DIP" id="DIP-5786N"/>
<dbReference type="FunCoup" id="P53347">
    <property type="interactions" value="609"/>
</dbReference>
<dbReference type="STRING" id="10090.ENSMUSP00000074708"/>
<dbReference type="GlyCosmos" id="P53347">
    <property type="glycosylation" value="3 sites, No reported glycans"/>
</dbReference>
<dbReference type="GlyGen" id="P53347">
    <property type="glycosylation" value="3 sites"/>
</dbReference>
<dbReference type="PhosphoSitePlus" id="P53347"/>
<dbReference type="PaxDb" id="10090-ENSMUSP00000074708"/>
<dbReference type="Antibodypedia" id="10652">
    <property type="antibodies" value="647 antibodies from 37 providers"/>
</dbReference>
<dbReference type="DNASU" id="18413"/>
<dbReference type="Ensembl" id="ENSMUST00000075221.3">
    <property type="protein sequence ID" value="ENSMUSP00000074708.3"/>
    <property type="gene ID" value="ENSMUSG00000058755.4"/>
</dbReference>
<dbReference type="GeneID" id="18413"/>
<dbReference type="KEGG" id="mmu:18413"/>
<dbReference type="UCSC" id="uc007hus.2">
    <property type="organism name" value="mouse"/>
</dbReference>
<dbReference type="AGR" id="MGI:104749"/>
<dbReference type="CTD" id="5008"/>
<dbReference type="MGI" id="MGI:104749">
    <property type="gene designation" value="Osm"/>
</dbReference>
<dbReference type="VEuPathDB" id="HostDB:ENSMUSG00000058755"/>
<dbReference type="eggNOG" id="ENOG502RVJA">
    <property type="taxonomic scope" value="Eukaryota"/>
</dbReference>
<dbReference type="GeneTree" id="ENSGT00390000004850"/>
<dbReference type="HOGENOM" id="CLU_102028_0_0_1"/>
<dbReference type="InParanoid" id="P53347"/>
<dbReference type="OMA" id="FMHSVGQ"/>
<dbReference type="OrthoDB" id="9837363at2759"/>
<dbReference type="PhylomeDB" id="P53347"/>
<dbReference type="TreeFam" id="TF338204"/>
<dbReference type="Reactome" id="R-MMU-6788467">
    <property type="pathway name" value="IL-6-type cytokine receptor ligand interactions"/>
</dbReference>
<dbReference type="BioGRID-ORCS" id="18413">
    <property type="hits" value="3 hits in 78 CRISPR screens"/>
</dbReference>
<dbReference type="PRO" id="PR:P53347"/>
<dbReference type="Proteomes" id="UP000000589">
    <property type="component" value="Chromosome 11"/>
</dbReference>
<dbReference type="RNAct" id="P53347">
    <property type="molecule type" value="protein"/>
</dbReference>
<dbReference type="Bgee" id="ENSMUSG00000058755">
    <property type="expression patterns" value="Expressed in granulocyte and 21 other cell types or tissues"/>
</dbReference>
<dbReference type="GO" id="GO:0005615">
    <property type="term" value="C:extracellular space"/>
    <property type="evidence" value="ECO:0007669"/>
    <property type="project" value="UniProtKB-KW"/>
</dbReference>
<dbReference type="GO" id="GO:0005125">
    <property type="term" value="F:cytokine activity"/>
    <property type="evidence" value="ECO:0000314"/>
    <property type="project" value="MGI"/>
</dbReference>
<dbReference type="GO" id="GO:0005147">
    <property type="term" value="F:oncostatin-M receptor binding"/>
    <property type="evidence" value="ECO:0007669"/>
    <property type="project" value="InterPro"/>
</dbReference>
<dbReference type="GO" id="GO:0048266">
    <property type="term" value="P:behavioral response to pain"/>
    <property type="evidence" value="ECO:0000315"/>
    <property type="project" value="MGI"/>
</dbReference>
<dbReference type="GO" id="GO:0006955">
    <property type="term" value="P:immune response"/>
    <property type="evidence" value="ECO:0007669"/>
    <property type="project" value="InterPro"/>
</dbReference>
<dbReference type="GO" id="GO:0140013">
    <property type="term" value="P:meiotic nuclear division"/>
    <property type="evidence" value="ECO:0000314"/>
    <property type="project" value="MGI"/>
</dbReference>
<dbReference type="GO" id="GO:0046888">
    <property type="term" value="P:negative regulation of hormone secretion"/>
    <property type="evidence" value="ECO:0000266"/>
    <property type="project" value="MGI"/>
</dbReference>
<dbReference type="GO" id="GO:0045835">
    <property type="term" value="P:negative regulation of meiotic nuclear division"/>
    <property type="evidence" value="ECO:0000314"/>
    <property type="project" value="MGI"/>
</dbReference>
<dbReference type="GO" id="GO:0038165">
    <property type="term" value="P:oncostatin-M-mediated signaling pathway"/>
    <property type="evidence" value="ECO:0007669"/>
    <property type="project" value="InterPro"/>
</dbReference>
<dbReference type="GO" id="GO:0007422">
    <property type="term" value="P:peripheral nervous system development"/>
    <property type="evidence" value="ECO:0000315"/>
    <property type="project" value="MGI"/>
</dbReference>
<dbReference type="GO" id="GO:2001235">
    <property type="term" value="P:positive regulation of apoptotic signaling pathway"/>
    <property type="evidence" value="ECO:0000314"/>
    <property type="project" value="MGI"/>
</dbReference>
<dbReference type="GO" id="GO:0043410">
    <property type="term" value="P:positive regulation of MAPK cascade"/>
    <property type="evidence" value="ECO:0000266"/>
    <property type="project" value="MGI"/>
</dbReference>
<dbReference type="GO" id="GO:0045944">
    <property type="term" value="P:positive regulation of transcription by RNA polymerase II"/>
    <property type="evidence" value="ECO:0000266"/>
    <property type="project" value="MGI"/>
</dbReference>
<dbReference type="GO" id="GO:0009408">
    <property type="term" value="P:response to heat"/>
    <property type="evidence" value="ECO:0000315"/>
    <property type="project" value="MGI"/>
</dbReference>
<dbReference type="Gene3D" id="1.20.1250.10">
    <property type="match status" value="1"/>
</dbReference>
<dbReference type="InterPro" id="IPR009079">
    <property type="entry name" value="4_helix_cytokine-like_core"/>
</dbReference>
<dbReference type="InterPro" id="IPR001581">
    <property type="entry name" value="Leukemia_IF/oncostatin"/>
</dbReference>
<dbReference type="InterPro" id="IPR019827">
    <property type="entry name" value="Leukemia_IF/oncostatin_CS"/>
</dbReference>
<dbReference type="InterPro" id="IPR039578">
    <property type="entry name" value="OSM"/>
</dbReference>
<dbReference type="PANTHER" id="PTHR14261">
    <property type="entry name" value="ONCOSTATIN M"/>
    <property type="match status" value="1"/>
</dbReference>
<dbReference type="PANTHER" id="PTHR14261:SF0">
    <property type="entry name" value="ONCOSTATIN-M"/>
    <property type="match status" value="1"/>
</dbReference>
<dbReference type="Pfam" id="PF01291">
    <property type="entry name" value="LIF_OSM"/>
    <property type="match status" value="1"/>
</dbReference>
<dbReference type="SMART" id="SM00080">
    <property type="entry name" value="LIF_OSM"/>
    <property type="match status" value="1"/>
</dbReference>
<dbReference type="SUPFAM" id="SSF47266">
    <property type="entry name" value="4-helical cytokines"/>
    <property type="match status" value="1"/>
</dbReference>
<dbReference type="PROSITE" id="PS00590">
    <property type="entry name" value="LIF_OSM"/>
    <property type="match status" value="1"/>
</dbReference>
<reference key="1">
    <citation type="journal article" date="1996" name="EMBO J.">
        <title>Mouse oncostatin M: an immediate early gene induced by multiple cytokines through the JAK-STAT5 pathway.</title>
        <authorList>
            <person name="Yoshimura A."/>
            <person name="Ichihara M."/>
            <person name="Kinjyo I."/>
            <person name="Moriyama M."/>
            <person name="Copeland N.G."/>
            <person name="Gilbert D.J."/>
            <person name="Jenkins N.A."/>
            <person name="Hara T."/>
            <person name="Miyajima A."/>
        </authorList>
    </citation>
    <scope>NUCLEOTIDE SEQUENCE [MRNA]</scope>
</reference>
<reference key="2">
    <citation type="journal article" date="2005" name="Science">
        <title>The transcriptional landscape of the mammalian genome.</title>
        <authorList>
            <person name="Carninci P."/>
            <person name="Kasukawa T."/>
            <person name="Katayama S."/>
            <person name="Gough J."/>
            <person name="Frith M.C."/>
            <person name="Maeda N."/>
            <person name="Oyama R."/>
            <person name="Ravasi T."/>
            <person name="Lenhard B."/>
            <person name="Wells C."/>
            <person name="Kodzius R."/>
            <person name="Shimokawa K."/>
            <person name="Bajic V.B."/>
            <person name="Brenner S.E."/>
            <person name="Batalov S."/>
            <person name="Forrest A.R."/>
            <person name="Zavolan M."/>
            <person name="Davis M.J."/>
            <person name="Wilming L.G."/>
            <person name="Aidinis V."/>
            <person name="Allen J.E."/>
            <person name="Ambesi-Impiombato A."/>
            <person name="Apweiler R."/>
            <person name="Aturaliya R.N."/>
            <person name="Bailey T.L."/>
            <person name="Bansal M."/>
            <person name="Baxter L."/>
            <person name="Beisel K.W."/>
            <person name="Bersano T."/>
            <person name="Bono H."/>
            <person name="Chalk A.M."/>
            <person name="Chiu K.P."/>
            <person name="Choudhary V."/>
            <person name="Christoffels A."/>
            <person name="Clutterbuck D.R."/>
            <person name="Crowe M.L."/>
            <person name="Dalla E."/>
            <person name="Dalrymple B.P."/>
            <person name="de Bono B."/>
            <person name="Della Gatta G."/>
            <person name="di Bernardo D."/>
            <person name="Down T."/>
            <person name="Engstrom P."/>
            <person name="Fagiolini M."/>
            <person name="Faulkner G."/>
            <person name="Fletcher C.F."/>
            <person name="Fukushima T."/>
            <person name="Furuno M."/>
            <person name="Futaki S."/>
            <person name="Gariboldi M."/>
            <person name="Georgii-Hemming P."/>
            <person name="Gingeras T.R."/>
            <person name="Gojobori T."/>
            <person name="Green R.E."/>
            <person name="Gustincich S."/>
            <person name="Harbers M."/>
            <person name="Hayashi Y."/>
            <person name="Hensch T.K."/>
            <person name="Hirokawa N."/>
            <person name="Hill D."/>
            <person name="Huminiecki L."/>
            <person name="Iacono M."/>
            <person name="Ikeo K."/>
            <person name="Iwama A."/>
            <person name="Ishikawa T."/>
            <person name="Jakt M."/>
            <person name="Kanapin A."/>
            <person name="Katoh M."/>
            <person name="Kawasawa Y."/>
            <person name="Kelso J."/>
            <person name="Kitamura H."/>
            <person name="Kitano H."/>
            <person name="Kollias G."/>
            <person name="Krishnan S.P."/>
            <person name="Kruger A."/>
            <person name="Kummerfeld S.K."/>
            <person name="Kurochkin I.V."/>
            <person name="Lareau L.F."/>
            <person name="Lazarevic D."/>
            <person name="Lipovich L."/>
            <person name="Liu J."/>
            <person name="Liuni S."/>
            <person name="McWilliam S."/>
            <person name="Madan Babu M."/>
            <person name="Madera M."/>
            <person name="Marchionni L."/>
            <person name="Matsuda H."/>
            <person name="Matsuzawa S."/>
            <person name="Miki H."/>
            <person name="Mignone F."/>
            <person name="Miyake S."/>
            <person name="Morris K."/>
            <person name="Mottagui-Tabar S."/>
            <person name="Mulder N."/>
            <person name="Nakano N."/>
            <person name="Nakauchi H."/>
            <person name="Ng P."/>
            <person name="Nilsson R."/>
            <person name="Nishiguchi S."/>
            <person name="Nishikawa S."/>
            <person name="Nori F."/>
            <person name="Ohara O."/>
            <person name="Okazaki Y."/>
            <person name="Orlando V."/>
            <person name="Pang K.C."/>
            <person name="Pavan W.J."/>
            <person name="Pavesi G."/>
            <person name="Pesole G."/>
            <person name="Petrovsky N."/>
            <person name="Piazza S."/>
            <person name="Reed J."/>
            <person name="Reid J.F."/>
            <person name="Ring B.Z."/>
            <person name="Ringwald M."/>
            <person name="Rost B."/>
            <person name="Ruan Y."/>
            <person name="Salzberg S.L."/>
            <person name="Sandelin A."/>
            <person name="Schneider C."/>
            <person name="Schoenbach C."/>
            <person name="Sekiguchi K."/>
            <person name="Semple C.A."/>
            <person name="Seno S."/>
            <person name="Sessa L."/>
            <person name="Sheng Y."/>
            <person name="Shibata Y."/>
            <person name="Shimada H."/>
            <person name="Shimada K."/>
            <person name="Silva D."/>
            <person name="Sinclair B."/>
            <person name="Sperling S."/>
            <person name="Stupka E."/>
            <person name="Sugiura K."/>
            <person name="Sultana R."/>
            <person name="Takenaka Y."/>
            <person name="Taki K."/>
            <person name="Tammoja K."/>
            <person name="Tan S.L."/>
            <person name="Tang S."/>
            <person name="Taylor M.S."/>
            <person name="Tegner J."/>
            <person name="Teichmann S.A."/>
            <person name="Ueda H.R."/>
            <person name="van Nimwegen E."/>
            <person name="Verardo R."/>
            <person name="Wei C.L."/>
            <person name="Yagi K."/>
            <person name="Yamanishi H."/>
            <person name="Zabarovsky E."/>
            <person name="Zhu S."/>
            <person name="Zimmer A."/>
            <person name="Hide W."/>
            <person name="Bult C."/>
            <person name="Grimmond S.M."/>
            <person name="Teasdale R.D."/>
            <person name="Liu E.T."/>
            <person name="Brusic V."/>
            <person name="Quackenbush J."/>
            <person name="Wahlestedt C."/>
            <person name="Mattick J.S."/>
            <person name="Hume D.A."/>
            <person name="Kai C."/>
            <person name="Sasaki D."/>
            <person name="Tomaru Y."/>
            <person name="Fukuda S."/>
            <person name="Kanamori-Katayama M."/>
            <person name="Suzuki M."/>
            <person name="Aoki J."/>
            <person name="Arakawa T."/>
            <person name="Iida J."/>
            <person name="Imamura K."/>
            <person name="Itoh M."/>
            <person name="Kato T."/>
            <person name="Kawaji H."/>
            <person name="Kawagashira N."/>
            <person name="Kawashima T."/>
            <person name="Kojima M."/>
            <person name="Kondo S."/>
            <person name="Konno H."/>
            <person name="Nakano K."/>
            <person name="Ninomiya N."/>
            <person name="Nishio T."/>
            <person name="Okada M."/>
            <person name="Plessy C."/>
            <person name="Shibata K."/>
            <person name="Shiraki T."/>
            <person name="Suzuki S."/>
            <person name="Tagami M."/>
            <person name="Waki K."/>
            <person name="Watahiki A."/>
            <person name="Okamura-Oho Y."/>
            <person name="Suzuki H."/>
            <person name="Kawai J."/>
            <person name="Hayashizaki Y."/>
        </authorList>
    </citation>
    <scope>NUCLEOTIDE SEQUENCE [LARGE SCALE MRNA]</scope>
    <source>
        <strain>C57BL/6J</strain>
        <tissue>Dendritic cell</tissue>
    </source>
</reference>
<reference key="3">
    <citation type="journal article" date="2009" name="PLoS Biol.">
        <title>Lineage-specific biology revealed by a finished genome assembly of the mouse.</title>
        <authorList>
            <person name="Church D.M."/>
            <person name="Goodstadt L."/>
            <person name="Hillier L.W."/>
            <person name="Zody M.C."/>
            <person name="Goldstein S."/>
            <person name="She X."/>
            <person name="Bult C.J."/>
            <person name="Agarwala R."/>
            <person name="Cherry J.L."/>
            <person name="DiCuccio M."/>
            <person name="Hlavina W."/>
            <person name="Kapustin Y."/>
            <person name="Meric P."/>
            <person name="Maglott D."/>
            <person name="Birtle Z."/>
            <person name="Marques A.C."/>
            <person name="Graves T."/>
            <person name="Zhou S."/>
            <person name="Teague B."/>
            <person name="Potamousis K."/>
            <person name="Churas C."/>
            <person name="Place M."/>
            <person name="Herschleb J."/>
            <person name="Runnheim R."/>
            <person name="Forrest D."/>
            <person name="Amos-Landgraf J."/>
            <person name="Schwartz D.C."/>
            <person name="Cheng Z."/>
            <person name="Lindblad-Toh K."/>
            <person name="Eichler E.E."/>
            <person name="Ponting C.P."/>
        </authorList>
    </citation>
    <scope>NUCLEOTIDE SEQUENCE [LARGE SCALE GENOMIC DNA]</scope>
    <source>
        <strain>C57BL/6J</strain>
    </source>
</reference>
<reference key="4">
    <citation type="journal article" date="2004" name="Genome Res.">
        <title>The status, quality, and expansion of the NIH full-length cDNA project: the Mammalian Gene Collection (MGC).</title>
        <authorList>
            <consortium name="The MGC Project Team"/>
        </authorList>
    </citation>
    <scope>NUCLEOTIDE SEQUENCE [LARGE SCALE MRNA]</scope>
</reference>
<reference key="5">
    <citation type="journal article" date="1999" name="Blood">
        <title>Reconstitution of the functional mouse oncostatin M (OSM) receptor: molecular cloning of the OSM receptor beta subunit.</title>
        <authorList>
            <person name="Tanaka M."/>
            <person name="Hara T."/>
            <person name="Copeland N.G."/>
            <person name="Gilbert D.J."/>
            <person name="Jenkins N.A."/>
            <person name="Miyajima A."/>
        </authorList>
    </citation>
    <scope>INTERACTION WITH OSMR AND IL6ST</scope>
</reference>
<accession>P53347</accession>
<accession>Q3U1Y5</accession>
<accession>Q5SPX6</accession>
<evidence type="ECO:0000250" key="1"/>
<evidence type="ECO:0000250" key="2">
    <source>
        <dbReference type="UniProtKB" id="P13725"/>
    </source>
</evidence>
<evidence type="ECO:0000255" key="3"/>
<evidence type="ECO:0000256" key="4">
    <source>
        <dbReference type="SAM" id="MobiDB-lite"/>
    </source>
</evidence>
<evidence type="ECO:0000305" key="5"/>
<evidence type="ECO:0007829" key="6">
    <source>
        <dbReference type="PDB" id="8V2C"/>
    </source>
</evidence>
<gene>
    <name type="primary">Osm</name>
</gene>
<protein>
    <recommendedName>
        <fullName>Oncostatin-M</fullName>
        <shortName>OSM</shortName>
    </recommendedName>
</protein>
<name>ONCM_MOUSE</name>
<organism>
    <name type="scientific">Mus musculus</name>
    <name type="common">Mouse</name>
    <dbReference type="NCBI Taxonomy" id="10090"/>
    <lineage>
        <taxon>Eukaryota</taxon>
        <taxon>Metazoa</taxon>
        <taxon>Chordata</taxon>
        <taxon>Craniata</taxon>
        <taxon>Vertebrata</taxon>
        <taxon>Euteleostomi</taxon>
        <taxon>Mammalia</taxon>
        <taxon>Eutheria</taxon>
        <taxon>Euarchontoglires</taxon>
        <taxon>Glires</taxon>
        <taxon>Rodentia</taxon>
        <taxon>Myomorpha</taxon>
        <taxon>Muroidea</taxon>
        <taxon>Muridae</taxon>
        <taxon>Murinae</taxon>
        <taxon>Mus</taxon>
        <taxon>Mus</taxon>
    </lineage>
</organism>
<feature type="signal peptide" evidence="3">
    <location>
        <begin position="1"/>
        <end position="24"/>
    </location>
</feature>
<feature type="chain" id="PRO_0000017722" description="Oncostatin-M" evidence="2">
    <location>
        <begin position="25"/>
        <end position="206"/>
    </location>
</feature>
<feature type="propeptide" id="PRO_0000408764" evidence="2">
    <location>
        <begin position="207"/>
        <end position="263"/>
    </location>
</feature>
<feature type="region of interest" description="Disordered" evidence="4">
    <location>
        <begin position="241"/>
        <end position="263"/>
    </location>
</feature>
<feature type="compositionally biased region" description="Basic residues" evidence="4">
    <location>
        <begin position="241"/>
        <end position="252"/>
    </location>
</feature>
<feature type="compositionally biased region" description="Polar residues" evidence="4">
    <location>
        <begin position="253"/>
        <end position="263"/>
    </location>
</feature>
<feature type="glycosylation site" description="N-linked (GlcNAc...) asparagine" evidence="3">
    <location>
        <position position="30"/>
    </location>
</feature>
<feature type="glycosylation site" description="N-linked (GlcNAc...) asparagine" evidence="3">
    <location>
        <position position="44"/>
    </location>
</feature>
<feature type="glycosylation site" description="N-linked (GlcNAc...) asparagine" evidence="3">
    <location>
        <position position="145"/>
    </location>
</feature>
<feature type="disulfide bond" evidence="1">
    <location>
        <begin position="28"/>
        <end position="139"/>
    </location>
</feature>
<feature type="disulfide bond" evidence="1">
    <location>
        <begin position="71"/>
        <end position="177"/>
    </location>
</feature>
<feature type="sequence conflict" description="In Ref. 2; BAE33358." evidence="5" ref="2">
    <original>T</original>
    <variation>S</variation>
    <location>
        <position position="217"/>
    </location>
</feature>
<feature type="strand" evidence="6">
    <location>
        <begin position="26"/>
        <end position="28"/>
    </location>
</feature>
<feature type="helix" evidence="6">
    <location>
        <begin position="33"/>
        <end position="46"/>
    </location>
</feature>
<feature type="turn" evidence="6">
    <location>
        <begin position="49"/>
        <end position="52"/>
    </location>
</feature>
<feature type="helix" evidence="6">
    <location>
        <begin position="53"/>
        <end position="59"/>
    </location>
</feature>
<feature type="helix" evidence="6">
    <location>
        <begin position="65"/>
        <end position="73"/>
    </location>
</feature>
<feature type="helix" evidence="6">
    <location>
        <begin position="81"/>
        <end position="86"/>
    </location>
</feature>
<feature type="helix" evidence="6">
    <location>
        <begin position="89"/>
        <end position="114"/>
    </location>
</feature>
<feature type="helix" evidence="6">
    <location>
        <begin position="121"/>
        <end position="143"/>
    </location>
</feature>
<feature type="helix" evidence="6">
    <location>
        <begin position="170"/>
        <end position="200"/>
    </location>
</feature>
<proteinExistence type="evidence at protein level"/>